<comment type="function">
    <text evidence="1">The RuvA-RuvB-RuvC complex processes Holliday junction (HJ) DNA during genetic recombination and DNA repair, while the RuvA-RuvB complex plays an important role in the rescue of blocked DNA replication forks via replication fork reversal (RFR). RuvA specifically binds to HJ cruciform DNA, conferring on it an open structure. The RuvB hexamer acts as an ATP-dependent pump, pulling dsDNA into and through the RuvAB complex. HJ branch migration allows RuvC to scan DNA until it finds its consensus sequence, where it cleaves and resolves the cruciform DNA.</text>
</comment>
<comment type="subunit">
    <text evidence="1">Homotetramer. Forms an RuvA(8)-RuvB(12)-Holliday junction (HJ) complex. HJ DNA is sandwiched between 2 RuvA tetramers; dsDNA enters through RuvA and exits via RuvB. An RuvB hexamer assembles on each DNA strand where it exits the tetramer. Each RuvB hexamer is contacted by two RuvA subunits (via domain III) on 2 adjacent RuvB subunits; this complex drives branch migration. In the full resolvosome a probable DNA-RuvA(4)-RuvB(12)-RuvC(2) complex forms which resolves the HJ.</text>
</comment>
<comment type="subcellular location">
    <subcellularLocation>
        <location evidence="1">Cytoplasm</location>
    </subcellularLocation>
</comment>
<comment type="domain">
    <text evidence="1">Has three domains with a flexible linker between the domains II and III and assumes an 'L' shape. Domain III is highly mobile and contacts RuvB.</text>
</comment>
<comment type="similarity">
    <text evidence="1">Belongs to the RuvA family.</text>
</comment>
<reference key="1">
    <citation type="submission" date="2007-06" db="EMBL/GenBank/DDBJ databases">
        <title>Complete sequence of Marinomonas sp. MWYL1.</title>
        <authorList>
            <consortium name="US DOE Joint Genome Institute"/>
            <person name="Copeland A."/>
            <person name="Lucas S."/>
            <person name="Lapidus A."/>
            <person name="Barry K."/>
            <person name="Glavina del Rio T."/>
            <person name="Dalin E."/>
            <person name="Tice H."/>
            <person name="Pitluck S."/>
            <person name="Kiss H."/>
            <person name="Brettin T."/>
            <person name="Bruce D."/>
            <person name="Detter J.C."/>
            <person name="Han C."/>
            <person name="Schmutz J."/>
            <person name="Larimer F."/>
            <person name="Land M."/>
            <person name="Hauser L."/>
            <person name="Kyrpides N."/>
            <person name="Kim E."/>
            <person name="Johnston A.W.B."/>
            <person name="Todd J.D."/>
            <person name="Rogers R."/>
            <person name="Wexler M."/>
            <person name="Bond P.L."/>
            <person name="Li Y."/>
            <person name="Richardson P."/>
        </authorList>
    </citation>
    <scope>NUCLEOTIDE SEQUENCE [LARGE SCALE GENOMIC DNA]</scope>
    <source>
        <strain>MWYL1</strain>
    </source>
</reference>
<sequence>MIGRIVGTLIEKTPPELMVDVNGIGYEVSASMTTIYDLPQIGGQVTLFTHLLVKEDSHTLYGFIDKNERALFRVLIKVNGIGPKMALAILSSMSSEELITNVQESDVTALTRIPGVGKKTAERLIIELRDKLGQAAKTDLFSAPAVLRQVQADPRQEAEAALISLGYKPQEAAKAIAGVPVDAANSEDVIKAALKGMLRK</sequence>
<proteinExistence type="inferred from homology"/>
<gene>
    <name evidence="1" type="primary">ruvA</name>
    <name type="ordered locus">Mmwyl1_2189</name>
</gene>
<feature type="chain" id="PRO_1000074424" description="Holliday junction branch migration complex subunit RuvA">
    <location>
        <begin position="1"/>
        <end position="200"/>
    </location>
</feature>
<feature type="region of interest" description="Domain I" evidence="1">
    <location>
        <begin position="1"/>
        <end position="64"/>
    </location>
</feature>
<feature type="region of interest" description="Domain II" evidence="1">
    <location>
        <begin position="65"/>
        <end position="143"/>
    </location>
</feature>
<feature type="region of interest" description="Flexible linker" evidence="1">
    <location>
        <begin position="144"/>
        <end position="149"/>
    </location>
</feature>
<feature type="region of interest" description="Domain III" evidence="1">
    <location>
        <begin position="150"/>
        <end position="200"/>
    </location>
</feature>
<organism>
    <name type="scientific">Marinomonas sp. (strain MWYL1)</name>
    <dbReference type="NCBI Taxonomy" id="400668"/>
    <lineage>
        <taxon>Bacteria</taxon>
        <taxon>Pseudomonadati</taxon>
        <taxon>Pseudomonadota</taxon>
        <taxon>Gammaproteobacteria</taxon>
        <taxon>Oceanospirillales</taxon>
        <taxon>Oceanospirillaceae</taxon>
        <taxon>Marinomonas</taxon>
    </lineage>
</organism>
<evidence type="ECO:0000255" key="1">
    <source>
        <dbReference type="HAMAP-Rule" id="MF_00031"/>
    </source>
</evidence>
<name>RUVA_MARMS</name>
<dbReference type="EMBL" id="CP000749">
    <property type="protein sequence ID" value="ABR71111.1"/>
    <property type="molecule type" value="Genomic_DNA"/>
</dbReference>
<dbReference type="SMR" id="A6VXD2"/>
<dbReference type="STRING" id="400668.Mmwyl1_2189"/>
<dbReference type="KEGG" id="mmw:Mmwyl1_2189"/>
<dbReference type="eggNOG" id="COG0632">
    <property type="taxonomic scope" value="Bacteria"/>
</dbReference>
<dbReference type="HOGENOM" id="CLU_087936_0_0_6"/>
<dbReference type="OrthoDB" id="5293449at2"/>
<dbReference type="GO" id="GO:0005737">
    <property type="term" value="C:cytoplasm"/>
    <property type="evidence" value="ECO:0007669"/>
    <property type="project" value="UniProtKB-SubCell"/>
</dbReference>
<dbReference type="GO" id="GO:0009379">
    <property type="term" value="C:Holliday junction helicase complex"/>
    <property type="evidence" value="ECO:0007669"/>
    <property type="project" value="InterPro"/>
</dbReference>
<dbReference type="GO" id="GO:0048476">
    <property type="term" value="C:Holliday junction resolvase complex"/>
    <property type="evidence" value="ECO:0007669"/>
    <property type="project" value="UniProtKB-UniRule"/>
</dbReference>
<dbReference type="GO" id="GO:0005524">
    <property type="term" value="F:ATP binding"/>
    <property type="evidence" value="ECO:0007669"/>
    <property type="project" value="InterPro"/>
</dbReference>
<dbReference type="GO" id="GO:0000400">
    <property type="term" value="F:four-way junction DNA binding"/>
    <property type="evidence" value="ECO:0007669"/>
    <property type="project" value="UniProtKB-UniRule"/>
</dbReference>
<dbReference type="GO" id="GO:0009378">
    <property type="term" value="F:four-way junction helicase activity"/>
    <property type="evidence" value="ECO:0007669"/>
    <property type="project" value="InterPro"/>
</dbReference>
<dbReference type="GO" id="GO:0006310">
    <property type="term" value="P:DNA recombination"/>
    <property type="evidence" value="ECO:0007669"/>
    <property type="project" value="UniProtKB-UniRule"/>
</dbReference>
<dbReference type="GO" id="GO:0006281">
    <property type="term" value="P:DNA repair"/>
    <property type="evidence" value="ECO:0007669"/>
    <property type="project" value="UniProtKB-UniRule"/>
</dbReference>
<dbReference type="CDD" id="cd14332">
    <property type="entry name" value="UBA_RuvA_C"/>
    <property type="match status" value="1"/>
</dbReference>
<dbReference type="Gene3D" id="1.10.150.20">
    <property type="entry name" value="5' to 3' exonuclease, C-terminal subdomain"/>
    <property type="match status" value="1"/>
</dbReference>
<dbReference type="Gene3D" id="1.10.8.10">
    <property type="entry name" value="DNA helicase RuvA subunit, C-terminal domain"/>
    <property type="match status" value="1"/>
</dbReference>
<dbReference type="Gene3D" id="2.40.50.140">
    <property type="entry name" value="Nucleic acid-binding proteins"/>
    <property type="match status" value="1"/>
</dbReference>
<dbReference type="HAMAP" id="MF_00031">
    <property type="entry name" value="DNA_HJ_migration_RuvA"/>
    <property type="match status" value="1"/>
</dbReference>
<dbReference type="InterPro" id="IPR013849">
    <property type="entry name" value="DNA_helicase_Holl-junc_RuvA_I"/>
</dbReference>
<dbReference type="InterPro" id="IPR003583">
    <property type="entry name" value="Hlx-hairpin-Hlx_DNA-bd_motif"/>
</dbReference>
<dbReference type="InterPro" id="IPR012340">
    <property type="entry name" value="NA-bd_OB-fold"/>
</dbReference>
<dbReference type="InterPro" id="IPR000085">
    <property type="entry name" value="RuvA"/>
</dbReference>
<dbReference type="InterPro" id="IPR010994">
    <property type="entry name" value="RuvA_2-like"/>
</dbReference>
<dbReference type="InterPro" id="IPR011114">
    <property type="entry name" value="RuvA_C"/>
</dbReference>
<dbReference type="InterPro" id="IPR036267">
    <property type="entry name" value="RuvA_C_sf"/>
</dbReference>
<dbReference type="NCBIfam" id="TIGR00084">
    <property type="entry name" value="ruvA"/>
    <property type="match status" value="1"/>
</dbReference>
<dbReference type="Pfam" id="PF14520">
    <property type="entry name" value="HHH_5"/>
    <property type="match status" value="1"/>
</dbReference>
<dbReference type="Pfam" id="PF07499">
    <property type="entry name" value="RuvA_C"/>
    <property type="match status" value="1"/>
</dbReference>
<dbReference type="Pfam" id="PF01330">
    <property type="entry name" value="RuvA_N"/>
    <property type="match status" value="1"/>
</dbReference>
<dbReference type="SMART" id="SM00278">
    <property type="entry name" value="HhH1"/>
    <property type="match status" value="2"/>
</dbReference>
<dbReference type="SUPFAM" id="SSF46929">
    <property type="entry name" value="DNA helicase RuvA subunit, C-terminal domain"/>
    <property type="match status" value="1"/>
</dbReference>
<dbReference type="SUPFAM" id="SSF50249">
    <property type="entry name" value="Nucleic acid-binding proteins"/>
    <property type="match status" value="1"/>
</dbReference>
<dbReference type="SUPFAM" id="SSF47781">
    <property type="entry name" value="RuvA domain 2-like"/>
    <property type="match status" value="1"/>
</dbReference>
<accession>A6VXD2</accession>
<keyword id="KW-0963">Cytoplasm</keyword>
<keyword id="KW-0227">DNA damage</keyword>
<keyword id="KW-0233">DNA recombination</keyword>
<keyword id="KW-0234">DNA repair</keyword>
<keyword id="KW-0238">DNA-binding</keyword>
<protein>
    <recommendedName>
        <fullName evidence="1">Holliday junction branch migration complex subunit RuvA</fullName>
    </recommendedName>
</protein>